<sequence length="330" mass="34443">MTHTLRVIFAGTPEFAAAALAAIHKAGFPVPLVLTQPDRPAGRGMKLQASAVKRYAVEHGMAVAQPPSLRRAGKYPAEAADAIELLRTTPHDVMVVAAYGLLLPQEVLDIPRAGCINIHASLLPRWRGAAPIHRAIEAGDAETGVTLMQMDVGLDTGAMIEEARIAIAPDDTTATLHDRLAADGARLIVDALVRLERDGTLPATPQPADGVTYAEKIGKHEAALDWRKPADVLARQVRAFDPFPGGVATLDGAAIKLWAAEPVATDGTIASAAPGTIVEAAPEGVVVACGSGALRVTQLQKPGGKRLPAREFLAGSPLAAGQRFALPDVD</sequence>
<accession>Q1BSJ4</accession>
<comment type="function">
    <text evidence="1">Attaches a formyl group to the free amino group of methionyl-tRNA(fMet). The formyl group appears to play a dual role in the initiator identity of N-formylmethionyl-tRNA by promoting its recognition by IF2 and preventing the misappropriation of this tRNA by the elongation apparatus.</text>
</comment>
<comment type="catalytic activity">
    <reaction evidence="1">
        <text>L-methionyl-tRNA(fMet) + (6R)-10-formyltetrahydrofolate = N-formyl-L-methionyl-tRNA(fMet) + (6S)-5,6,7,8-tetrahydrofolate + H(+)</text>
        <dbReference type="Rhea" id="RHEA:24380"/>
        <dbReference type="Rhea" id="RHEA-COMP:9952"/>
        <dbReference type="Rhea" id="RHEA-COMP:9953"/>
        <dbReference type="ChEBI" id="CHEBI:15378"/>
        <dbReference type="ChEBI" id="CHEBI:57453"/>
        <dbReference type="ChEBI" id="CHEBI:78530"/>
        <dbReference type="ChEBI" id="CHEBI:78844"/>
        <dbReference type="ChEBI" id="CHEBI:195366"/>
        <dbReference type="EC" id="2.1.2.9"/>
    </reaction>
</comment>
<comment type="similarity">
    <text evidence="1">Belongs to the Fmt family.</text>
</comment>
<proteinExistence type="inferred from homology"/>
<feature type="chain" id="PRO_1000020030" description="Methionyl-tRNA formyltransferase">
    <location>
        <begin position="1"/>
        <end position="330"/>
    </location>
</feature>
<feature type="binding site" evidence="1">
    <location>
        <begin position="121"/>
        <end position="124"/>
    </location>
    <ligand>
        <name>(6S)-5,6,7,8-tetrahydrofolate</name>
        <dbReference type="ChEBI" id="CHEBI:57453"/>
    </ligand>
</feature>
<name>FMT_BURO1</name>
<dbReference type="EC" id="2.1.2.9" evidence="1"/>
<dbReference type="EMBL" id="CP000378">
    <property type="protein sequence ID" value="ABF77411.1"/>
    <property type="molecule type" value="Genomic_DNA"/>
</dbReference>
<dbReference type="SMR" id="Q1BSJ4"/>
<dbReference type="HOGENOM" id="CLU_033347_1_2_4"/>
<dbReference type="GO" id="GO:0005829">
    <property type="term" value="C:cytosol"/>
    <property type="evidence" value="ECO:0007669"/>
    <property type="project" value="TreeGrafter"/>
</dbReference>
<dbReference type="GO" id="GO:0004479">
    <property type="term" value="F:methionyl-tRNA formyltransferase activity"/>
    <property type="evidence" value="ECO:0007669"/>
    <property type="project" value="UniProtKB-UniRule"/>
</dbReference>
<dbReference type="CDD" id="cd08646">
    <property type="entry name" value="FMT_core_Met-tRNA-FMT_N"/>
    <property type="match status" value="1"/>
</dbReference>
<dbReference type="CDD" id="cd08704">
    <property type="entry name" value="Met_tRNA_FMT_C"/>
    <property type="match status" value="1"/>
</dbReference>
<dbReference type="Gene3D" id="3.10.25.10">
    <property type="entry name" value="Formyl transferase, C-terminal domain"/>
    <property type="match status" value="1"/>
</dbReference>
<dbReference type="Gene3D" id="3.40.50.170">
    <property type="entry name" value="Formyl transferase, N-terminal domain"/>
    <property type="match status" value="1"/>
</dbReference>
<dbReference type="HAMAP" id="MF_00182">
    <property type="entry name" value="Formyl_trans"/>
    <property type="match status" value="1"/>
</dbReference>
<dbReference type="InterPro" id="IPR005794">
    <property type="entry name" value="Fmt"/>
</dbReference>
<dbReference type="InterPro" id="IPR005793">
    <property type="entry name" value="Formyl_trans_C"/>
</dbReference>
<dbReference type="InterPro" id="IPR037022">
    <property type="entry name" value="Formyl_trans_C_sf"/>
</dbReference>
<dbReference type="InterPro" id="IPR002376">
    <property type="entry name" value="Formyl_transf_N"/>
</dbReference>
<dbReference type="InterPro" id="IPR036477">
    <property type="entry name" value="Formyl_transf_N_sf"/>
</dbReference>
<dbReference type="InterPro" id="IPR011034">
    <property type="entry name" value="Formyl_transferase-like_C_sf"/>
</dbReference>
<dbReference type="InterPro" id="IPR001555">
    <property type="entry name" value="GART_AS"/>
</dbReference>
<dbReference type="InterPro" id="IPR044135">
    <property type="entry name" value="Met-tRNA-FMT_C"/>
</dbReference>
<dbReference type="InterPro" id="IPR041711">
    <property type="entry name" value="Met-tRNA-FMT_N"/>
</dbReference>
<dbReference type="NCBIfam" id="TIGR00460">
    <property type="entry name" value="fmt"/>
    <property type="match status" value="1"/>
</dbReference>
<dbReference type="PANTHER" id="PTHR11138">
    <property type="entry name" value="METHIONYL-TRNA FORMYLTRANSFERASE"/>
    <property type="match status" value="1"/>
</dbReference>
<dbReference type="PANTHER" id="PTHR11138:SF5">
    <property type="entry name" value="METHIONYL-TRNA FORMYLTRANSFERASE, MITOCHONDRIAL"/>
    <property type="match status" value="1"/>
</dbReference>
<dbReference type="Pfam" id="PF02911">
    <property type="entry name" value="Formyl_trans_C"/>
    <property type="match status" value="1"/>
</dbReference>
<dbReference type="Pfam" id="PF00551">
    <property type="entry name" value="Formyl_trans_N"/>
    <property type="match status" value="1"/>
</dbReference>
<dbReference type="SUPFAM" id="SSF50486">
    <property type="entry name" value="FMT C-terminal domain-like"/>
    <property type="match status" value="1"/>
</dbReference>
<dbReference type="SUPFAM" id="SSF53328">
    <property type="entry name" value="Formyltransferase"/>
    <property type="match status" value="1"/>
</dbReference>
<dbReference type="PROSITE" id="PS00373">
    <property type="entry name" value="GART"/>
    <property type="match status" value="1"/>
</dbReference>
<gene>
    <name evidence="1" type="primary">fmt</name>
    <name type="ordered locus">Bcen_2512</name>
</gene>
<keyword id="KW-0648">Protein biosynthesis</keyword>
<keyword id="KW-0808">Transferase</keyword>
<evidence type="ECO:0000255" key="1">
    <source>
        <dbReference type="HAMAP-Rule" id="MF_00182"/>
    </source>
</evidence>
<protein>
    <recommendedName>
        <fullName evidence="1">Methionyl-tRNA formyltransferase</fullName>
        <ecNumber evidence="1">2.1.2.9</ecNumber>
    </recommendedName>
</protein>
<reference key="1">
    <citation type="submission" date="2006-05" db="EMBL/GenBank/DDBJ databases">
        <title>Complete sequence of chromosome 1 of Burkholderia cenocepacia AU 1054.</title>
        <authorList>
            <consortium name="US DOE Joint Genome Institute"/>
            <person name="Copeland A."/>
            <person name="Lucas S."/>
            <person name="Lapidus A."/>
            <person name="Barry K."/>
            <person name="Detter J.C."/>
            <person name="Glavina del Rio T."/>
            <person name="Hammon N."/>
            <person name="Israni S."/>
            <person name="Dalin E."/>
            <person name="Tice H."/>
            <person name="Pitluck S."/>
            <person name="Chain P."/>
            <person name="Malfatti S."/>
            <person name="Shin M."/>
            <person name="Vergez L."/>
            <person name="Schmutz J."/>
            <person name="Larimer F."/>
            <person name="Land M."/>
            <person name="Hauser L."/>
            <person name="Kyrpides N."/>
            <person name="Lykidis A."/>
            <person name="LiPuma J.J."/>
            <person name="Konstantinidis K."/>
            <person name="Tiedje J.M."/>
            <person name="Richardson P."/>
        </authorList>
    </citation>
    <scope>NUCLEOTIDE SEQUENCE [LARGE SCALE GENOMIC DNA]</scope>
    <source>
        <strain>AU 1054</strain>
    </source>
</reference>
<organism>
    <name type="scientific">Burkholderia orbicola (strain AU 1054)</name>
    <dbReference type="NCBI Taxonomy" id="331271"/>
    <lineage>
        <taxon>Bacteria</taxon>
        <taxon>Pseudomonadati</taxon>
        <taxon>Pseudomonadota</taxon>
        <taxon>Betaproteobacteria</taxon>
        <taxon>Burkholderiales</taxon>
        <taxon>Burkholderiaceae</taxon>
        <taxon>Burkholderia</taxon>
        <taxon>Burkholderia cepacia complex</taxon>
        <taxon>Burkholderia orbicola</taxon>
    </lineage>
</organism>